<protein>
    <recommendedName>
        <fullName>Translocon-associated protein subunit delta</fullName>
        <shortName>TRAP-delta</shortName>
    </recommendedName>
    <alternativeName>
        <fullName>Signal sequence receptor subunit delta</fullName>
        <shortName>SSR-delta</shortName>
    </alternativeName>
</protein>
<keyword id="KW-1015">Disulfide bond</keyword>
<keyword id="KW-0256">Endoplasmic reticulum</keyword>
<keyword id="KW-1017">Isopeptide bond</keyword>
<keyword id="KW-0472">Membrane</keyword>
<keyword id="KW-1185">Reference proteome</keyword>
<keyword id="KW-0732">Signal</keyword>
<keyword id="KW-0812">Transmembrane</keyword>
<keyword id="KW-1133">Transmembrane helix</keyword>
<keyword id="KW-0832">Ubl conjugation</keyword>
<feature type="signal peptide" evidence="3">
    <location>
        <begin position="1"/>
        <end position="23"/>
    </location>
</feature>
<feature type="chain" id="PRO_0000033293" description="Translocon-associated protein subunit delta">
    <location>
        <begin position="24"/>
        <end position="172"/>
    </location>
</feature>
<feature type="topological domain" description="Lumenal" evidence="3">
    <location>
        <begin position="24"/>
        <end position="143"/>
    </location>
</feature>
<feature type="transmembrane region" description="Helical" evidence="3">
    <location>
        <begin position="144"/>
        <end position="164"/>
    </location>
</feature>
<feature type="topological domain" description="Cytoplasmic" evidence="3">
    <location>
        <begin position="165"/>
        <end position="172"/>
    </location>
</feature>
<feature type="disulfide bond" evidence="1">
    <location>
        <begin position="25"/>
        <end position="56"/>
    </location>
</feature>
<feature type="cross-link" description="Glycyl lysine isopeptide (Lys-Gly) (interchain with G-Cter in ubiquitin)" evidence="2">
    <location>
        <position position="72"/>
    </location>
</feature>
<gene>
    <name type="primary">Ssr4</name>
</gene>
<reference key="1">
    <citation type="journal article" date="1995" name="Biochem. J.">
        <title>Translocon-associated protein TRAP delta and a novel TRAP-like protein are coordinately expressed with pro-opiomelanocortin in Xenopus intermediate pituitary.</title>
        <authorList>
            <person name="Holthuis J.C.M."/>
            <person name="van Riel M.C.H.M."/>
            <person name="Martens G.J.M."/>
        </authorList>
    </citation>
    <scope>NUCLEOTIDE SEQUENCE [MRNA]</scope>
    <source>
        <tissue>Brain</tissue>
    </source>
</reference>
<reference key="2">
    <citation type="submission" date="1999-03" db="EMBL/GenBank/DDBJ databases">
        <title>Comparative sequence analysis of the mouse L1cam locus and the corresponding region of human Xq28.</title>
        <authorList>
            <person name="Platzer M."/>
            <person name="Brenner V."/>
            <person name="Reichwald K."/>
            <person name="Wiehe T."/>
            <person name="Oksche A."/>
            <person name="Rosenthal A."/>
        </authorList>
    </citation>
    <scope>NUCLEOTIDE SEQUENCE [GENOMIC DNA]</scope>
</reference>
<reference key="3">
    <citation type="journal article" date="2010" name="Cell">
        <title>A tissue-specific atlas of mouse protein phosphorylation and expression.</title>
        <authorList>
            <person name="Huttlin E.L."/>
            <person name="Jedrychowski M.P."/>
            <person name="Elias J.E."/>
            <person name="Goswami T."/>
            <person name="Rad R."/>
            <person name="Beausoleil S.A."/>
            <person name="Villen J."/>
            <person name="Haas W."/>
            <person name="Sowa M.E."/>
            <person name="Gygi S.P."/>
        </authorList>
    </citation>
    <scope>IDENTIFICATION BY MASS SPECTROMETRY [LARGE SCALE ANALYSIS]</scope>
    <source>
        <tissue>Brain</tissue>
        <tissue>Brown adipose tissue</tissue>
        <tissue>Heart</tissue>
        <tissue>Kidney</tissue>
        <tissue>Liver</tissue>
        <tissue>Lung</tissue>
        <tissue>Pancreas</tissue>
        <tissue>Spleen</tissue>
        <tissue>Testis</tissue>
    </source>
</reference>
<accession>Q62186</accession>
<dbReference type="EMBL" id="X90582">
    <property type="protein sequence ID" value="CAA62210.1"/>
    <property type="molecule type" value="mRNA"/>
</dbReference>
<dbReference type="EMBL" id="AF133093">
    <property type="status" value="NOT_ANNOTATED_CDS"/>
    <property type="molecule type" value="Genomic_DNA"/>
</dbReference>
<dbReference type="CCDS" id="CCDS30213.1"/>
<dbReference type="PIR" id="S59864">
    <property type="entry name" value="S59864"/>
</dbReference>
<dbReference type="RefSeq" id="NP_033305.1">
    <property type="nucleotide sequence ID" value="NM_009279.5"/>
</dbReference>
<dbReference type="SMR" id="Q62186"/>
<dbReference type="BioGRID" id="203511">
    <property type="interactions" value="11"/>
</dbReference>
<dbReference type="FunCoup" id="Q62186">
    <property type="interactions" value="2334"/>
</dbReference>
<dbReference type="IntAct" id="Q62186">
    <property type="interactions" value="2"/>
</dbReference>
<dbReference type="MINT" id="Q62186"/>
<dbReference type="STRING" id="10090.ENSMUSP00000131386"/>
<dbReference type="GlyGen" id="Q62186">
    <property type="glycosylation" value="1 site, 1 O-linked glycan (1 site)"/>
</dbReference>
<dbReference type="iPTMnet" id="Q62186"/>
<dbReference type="PhosphoSitePlus" id="Q62186"/>
<dbReference type="SwissPalm" id="Q62186"/>
<dbReference type="jPOST" id="Q62186"/>
<dbReference type="PaxDb" id="10090-ENSMUSP00000002090"/>
<dbReference type="ProteomicsDB" id="257422"/>
<dbReference type="Pumba" id="Q62186"/>
<dbReference type="Antibodypedia" id="30981">
    <property type="antibodies" value="163 antibodies from 25 providers"/>
</dbReference>
<dbReference type="DNASU" id="20832"/>
<dbReference type="Ensembl" id="ENSMUST00000002090.3">
    <property type="protein sequence ID" value="ENSMUSP00000002090.3"/>
    <property type="gene ID" value="ENSMUSG00000002014.13"/>
</dbReference>
<dbReference type="GeneID" id="20832"/>
<dbReference type="KEGG" id="mmu:20832"/>
<dbReference type="UCSC" id="uc009tmr.2">
    <property type="organism name" value="mouse"/>
</dbReference>
<dbReference type="AGR" id="MGI:1099464"/>
<dbReference type="CTD" id="6748"/>
<dbReference type="MGI" id="MGI:1099464">
    <property type="gene designation" value="Ssr4"/>
</dbReference>
<dbReference type="VEuPathDB" id="HostDB:ENSMUSG00000002014"/>
<dbReference type="eggNOG" id="KOG4088">
    <property type="taxonomic scope" value="Eukaryota"/>
</dbReference>
<dbReference type="GeneTree" id="ENSGT00390000008992"/>
<dbReference type="HOGENOM" id="CLU_100264_0_1_1"/>
<dbReference type="InParanoid" id="Q62186"/>
<dbReference type="OrthoDB" id="10055808at2759"/>
<dbReference type="TreeFam" id="TF313158"/>
<dbReference type="BioGRID-ORCS" id="20832">
    <property type="hits" value="2 hits in 75 CRISPR screens"/>
</dbReference>
<dbReference type="ChiTaRS" id="Ssr4">
    <property type="organism name" value="mouse"/>
</dbReference>
<dbReference type="PRO" id="PR:Q62186"/>
<dbReference type="Proteomes" id="UP000000589">
    <property type="component" value="Chromosome X"/>
</dbReference>
<dbReference type="RNAct" id="Q62186">
    <property type="molecule type" value="protein"/>
</dbReference>
<dbReference type="Bgee" id="ENSMUSG00000002014">
    <property type="expression patterns" value="Expressed in seminal vesicle and 270 other cell types or tissues"/>
</dbReference>
<dbReference type="ExpressionAtlas" id="Q62186">
    <property type="expression patterns" value="baseline and differential"/>
</dbReference>
<dbReference type="GO" id="GO:0005789">
    <property type="term" value="C:endoplasmic reticulum membrane"/>
    <property type="evidence" value="ECO:0007669"/>
    <property type="project" value="UniProtKB-SubCell"/>
</dbReference>
<dbReference type="InterPro" id="IPR008855">
    <property type="entry name" value="TRAP-delta"/>
</dbReference>
<dbReference type="PANTHER" id="PTHR12731:SF1">
    <property type="entry name" value="TRANSLOCON-ASSOCIATED PROTEIN SUBUNIT DELTA"/>
    <property type="match status" value="1"/>
</dbReference>
<dbReference type="PANTHER" id="PTHR12731">
    <property type="entry name" value="TRANSLOCON-ASSOCIATED PROTEIN, DELTA SUBUNIT"/>
    <property type="match status" value="1"/>
</dbReference>
<dbReference type="Pfam" id="PF05404">
    <property type="entry name" value="TRAP-delta"/>
    <property type="match status" value="1"/>
</dbReference>
<evidence type="ECO:0000250" key="1"/>
<evidence type="ECO:0000250" key="2">
    <source>
        <dbReference type="UniProtKB" id="P51571"/>
    </source>
</evidence>
<evidence type="ECO:0000255" key="3"/>
<evidence type="ECO:0000305" key="4"/>
<proteinExistence type="evidence at protein level"/>
<sequence>MAAMASFGALALLLLSGLSCCSEACLEPQITPSYYTTSDAVISTETVFIVEISLTCKNRVQNMALYADVSGKQFPVTRGQDVGRYQVSWSLEHKSAHAGTYEVRFFDEESYSLLRKAQRNNEDVSIIPPLFTVSVDHRGTWNGPWVSTEVLAAVIGIVIYYLAFSAKSHIQA</sequence>
<comment type="function">
    <text evidence="1">TRAP proteins are part of a complex whose function is to bind calcium to the ER membrane and thereby regulate the retention of ER resident proteins.</text>
</comment>
<comment type="subunit">
    <text evidence="1">Heterotetramer of TRAP-alpha, TRAP-beta, TRAP-delta and TRAP-gamma.</text>
</comment>
<comment type="subcellular location">
    <subcellularLocation>
        <location evidence="1">Endoplasmic reticulum membrane</location>
        <topology evidence="1">Single-pass type I membrane protein</topology>
    </subcellularLocation>
</comment>
<comment type="similarity">
    <text evidence="4">Belongs to the TRAP-delta family.</text>
</comment>
<name>SSRD_MOUSE</name>
<organism>
    <name type="scientific">Mus musculus</name>
    <name type="common">Mouse</name>
    <dbReference type="NCBI Taxonomy" id="10090"/>
    <lineage>
        <taxon>Eukaryota</taxon>
        <taxon>Metazoa</taxon>
        <taxon>Chordata</taxon>
        <taxon>Craniata</taxon>
        <taxon>Vertebrata</taxon>
        <taxon>Euteleostomi</taxon>
        <taxon>Mammalia</taxon>
        <taxon>Eutheria</taxon>
        <taxon>Euarchontoglires</taxon>
        <taxon>Glires</taxon>
        <taxon>Rodentia</taxon>
        <taxon>Myomorpha</taxon>
        <taxon>Muroidea</taxon>
        <taxon>Muridae</taxon>
        <taxon>Murinae</taxon>
        <taxon>Mus</taxon>
        <taxon>Mus</taxon>
    </lineage>
</organism>